<protein>
    <recommendedName>
        <fullName evidence="1">Pyridoxal 5'-phosphate synthase subunit PdxS</fullName>
        <shortName evidence="1">PLP synthase subunit PdxS</shortName>
        <ecNumber evidence="1">4.3.3.6</ecNumber>
    </recommendedName>
    <alternativeName>
        <fullName evidence="1">Pdx1</fullName>
    </alternativeName>
</protein>
<gene>
    <name evidence="1" type="primary">pdxS</name>
    <name type="ordered locus">MMP0103</name>
</gene>
<evidence type="ECO:0000255" key="1">
    <source>
        <dbReference type="HAMAP-Rule" id="MF_01824"/>
    </source>
</evidence>
<proteinExistence type="inferred from homology"/>
<organism>
    <name type="scientific">Methanococcus maripaludis (strain DSM 14266 / JCM 13030 / NBRC 101832 / S2 / LL)</name>
    <dbReference type="NCBI Taxonomy" id="267377"/>
    <lineage>
        <taxon>Archaea</taxon>
        <taxon>Methanobacteriati</taxon>
        <taxon>Methanobacteriota</taxon>
        <taxon>Methanomada group</taxon>
        <taxon>Methanococci</taxon>
        <taxon>Methanococcales</taxon>
        <taxon>Methanococcaceae</taxon>
        <taxon>Methanococcus</taxon>
    </lineage>
</organism>
<accession>Q6M115</accession>
<reference key="1">
    <citation type="journal article" date="2004" name="J. Bacteriol.">
        <title>Complete genome sequence of the genetically tractable hydrogenotrophic methanogen Methanococcus maripaludis.</title>
        <authorList>
            <person name="Hendrickson E.L."/>
            <person name="Kaul R."/>
            <person name="Zhou Y."/>
            <person name="Bovee D."/>
            <person name="Chapman P."/>
            <person name="Chung J."/>
            <person name="Conway de Macario E."/>
            <person name="Dodsworth J.A."/>
            <person name="Gillett W."/>
            <person name="Graham D.E."/>
            <person name="Hackett M."/>
            <person name="Haydock A.K."/>
            <person name="Kang A."/>
            <person name="Land M.L."/>
            <person name="Levy R."/>
            <person name="Lie T.J."/>
            <person name="Major T.A."/>
            <person name="Moore B.C."/>
            <person name="Porat I."/>
            <person name="Palmeiri A."/>
            <person name="Rouse G."/>
            <person name="Saenphimmachak C."/>
            <person name="Soell D."/>
            <person name="Van Dien S."/>
            <person name="Wang T."/>
            <person name="Whitman W.B."/>
            <person name="Xia Q."/>
            <person name="Zhang Y."/>
            <person name="Larimer F.W."/>
            <person name="Olson M.V."/>
            <person name="Leigh J.A."/>
        </authorList>
    </citation>
    <scope>NUCLEOTIDE SEQUENCE [LARGE SCALE GENOMIC DNA]</scope>
    <source>
        <strain>DSM 14266 / JCM 13030 / NBRC 101832 / S2 / LL</strain>
    </source>
</reference>
<comment type="function">
    <text evidence="1">Catalyzes the formation of pyridoxal 5'-phosphate from ribose 5-phosphate (RBP), glyceraldehyde 3-phosphate (G3P) and ammonia. The ammonia is provided by the PdxT subunit. Can also use ribulose 5-phosphate and dihydroxyacetone phosphate as substrates, resulting from enzyme-catalyzed isomerization of RBP and G3P, respectively.</text>
</comment>
<comment type="catalytic activity">
    <reaction evidence="1">
        <text>aldehydo-D-ribose 5-phosphate + D-glyceraldehyde 3-phosphate + L-glutamine = pyridoxal 5'-phosphate + L-glutamate + phosphate + 3 H2O + H(+)</text>
        <dbReference type="Rhea" id="RHEA:31507"/>
        <dbReference type="ChEBI" id="CHEBI:15377"/>
        <dbReference type="ChEBI" id="CHEBI:15378"/>
        <dbReference type="ChEBI" id="CHEBI:29985"/>
        <dbReference type="ChEBI" id="CHEBI:43474"/>
        <dbReference type="ChEBI" id="CHEBI:58273"/>
        <dbReference type="ChEBI" id="CHEBI:58359"/>
        <dbReference type="ChEBI" id="CHEBI:59776"/>
        <dbReference type="ChEBI" id="CHEBI:597326"/>
        <dbReference type="EC" id="4.3.3.6"/>
    </reaction>
</comment>
<comment type="pathway">
    <text evidence="1">Cofactor biosynthesis; pyridoxal 5'-phosphate biosynthesis.</text>
</comment>
<comment type="subunit">
    <text evidence="1">In the presence of PdxT, forms a dodecamer of heterodimers.</text>
</comment>
<comment type="similarity">
    <text evidence="1">Belongs to the PdxS/SNZ family.</text>
</comment>
<name>PDXS_METMP</name>
<dbReference type="EC" id="4.3.3.6" evidence="1"/>
<dbReference type="EMBL" id="BX950229">
    <property type="protein sequence ID" value="CAF29659.1"/>
    <property type="molecule type" value="Genomic_DNA"/>
</dbReference>
<dbReference type="RefSeq" id="WP_011170047.1">
    <property type="nucleotide sequence ID" value="NC_005791.1"/>
</dbReference>
<dbReference type="SMR" id="Q6M115"/>
<dbReference type="STRING" id="267377.MMP0103"/>
<dbReference type="EnsemblBacteria" id="CAF29659">
    <property type="protein sequence ID" value="CAF29659"/>
    <property type="gene ID" value="MMP0103"/>
</dbReference>
<dbReference type="GeneID" id="41278516"/>
<dbReference type="KEGG" id="mmp:MMP0103"/>
<dbReference type="PATRIC" id="fig|267377.15.peg.104"/>
<dbReference type="eggNOG" id="arCOG04075">
    <property type="taxonomic scope" value="Archaea"/>
</dbReference>
<dbReference type="HOGENOM" id="CLU_055352_1_0_2"/>
<dbReference type="OrthoDB" id="6840at2157"/>
<dbReference type="UniPathway" id="UPA00245"/>
<dbReference type="Proteomes" id="UP000000590">
    <property type="component" value="Chromosome"/>
</dbReference>
<dbReference type="GO" id="GO:0036381">
    <property type="term" value="F:pyridoxal 5'-phosphate synthase (glutamine hydrolysing) activity"/>
    <property type="evidence" value="ECO:0007669"/>
    <property type="project" value="UniProtKB-UniRule"/>
</dbReference>
<dbReference type="GO" id="GO:0006520">
    <property type="term" value="P:amino acid metabolic process"/>
    <property type="evidence" value="ECO:0007669"/>
    <property type="project" value="TreeGrafter"/>
</dbReference>
<dbReference type="GO" id="GO:0042823">
    <property type="term" value="P:pyridoxal phosphate biosynthetic process"/>
    <property type="evidence" value="ECO:0007669"/>
    <property type="project" value="UniProtKB-UniRule"/>
</dbReference>
<dbReference type="GO" id="GO:0008615">
    <property type="term" value="P:pyridoxine biosynthetic process"/>
    <property type="evidence" value="ECO:0007669"/>
    <property type="project" value="TreeGrafter"/>
</dbReference>
<dbReference type="CDD" id="cd04727">
    <property type="entry name" value="pdxS"/>
    <property type="match status" value="1"/>
</dbReference>
<dbReference type="FunFam" id="3.20.20.70:FF:000001">
    <property type="entry name" value="Pyridoxine biosynthesis protein PDX1"/>
    <property type="match status" value="1"/>
</dbReference>
<dbReference type="Gene3D" id="3.20.20.70">
    <property type="entry name" value="Aldolase class I"/>
    <property type="match status" value="1"/>
</dbReference>
<dbReference type="HAMAP" id="MF_01824">
    <property type="entry name" value="PdxS"/>
    <property type="match status" value="1"/>
</dbReference>
<dbReference type="InterPro" id="IPR013785">
    <property type="entry name" value="Aldolase_TIM"/>
</dbReference>
<dbReference type="InterPro" id="IPR001852">
    <property type="entry name" value="PdxS/SNZ"/>
</dbReference>
<dbReference type="InterPro" id="IPR033755">
    <property type="entry name" value="PdxS/SNZ_N"/>
</dbReference>
<dbReference type="InterPro" id="IPR011060">
    <property type="entry name" value="RibuloseP-bd_barrel"/>
</dbReference>
<dbReference type="NCBIfam" id="NF003215">
    <property type="entry name" value="PRK04180.1"/>
    <property type="match status" value="1"/>
</dbReference>
<dbReference type="NCBIfam" id="TIGR00343">
    <property type="entry name" value="pyridoxal 5'-phosphate synthase lyase subunit PdxS"/>
    <property type="match status" value="1"/>
</dbReference>
<dbReference type="PANTHER" id="PTHR31829">
    <property type="entry name" value="PYRIDOXAL 5'-PHOSPHATE SYNTHASE SUBUNIT SNZ1-RELATED"/>
    <property type="match status" value="1"/>
</dbReference>
<dbReference type="PANTHER" id="PTHR31829:SF0">
    <property type="entry name" value="PYRIDOXAL 5'-PHOSPHATE SYNTHASE SUBUNIT SNZ1-RELATED"/>
    <property type="match status" value="1"/>
</dbReference>
<dbReference type="Pfam" id="PF01680">
    <property type="entry name" value="SOR_SNZ"/>
    <property type="match status" value="1"/>
</dbReference>
<dbReference type="PIRSF" id="PIRSF029271">
    <property type="entry name" value="Pdx1"/>
    <property type="match status" value="1"/>
</dbReference>
<dbReference type="SUPFAM" id="SSF51366">
    <property type="entry name" value="Ribulose-phoshate binding barrel"/>
    <property type="match status" value="1"/>
</dbReference>
<dbReference type="PROSITE" id="PS01235">
    <property type="entry name" value="PDXS_SNZ_1"/>
    <property type="match status" value="1"/>
</dbReference>
<dbReference type="PROSITE" id="PS51129">
    <property type="entry name" value="PDXS_SNZ_2"/>
    <property type="match status" value="1"/>
</dbReference>
<feature type="chain" id="PRO_0000109438" description="Pyridoxal 5'-phosphate synthase subunit PdxS">
    <location>
        <begin position="1"/>
        <end position="299"/>
    </location>
</feature>
<feature type="active site" description="Schiff-base intermediate with D-ribose 5-phosphate" evidence="1">
    <location>
        <position position="81"/>
    </location>
</feature>
<feature type="binding site" evidence="1">
    <location>
        <position position="24"/>
    </location>
    <ligand>
        <name>D-ribose 5-phosphate</name>
        <dbReference type="ChEBI" id="CHEBI:78346"/>
    </ligand>
</feature>
<feature type="binding site" evidence="1">
    <location>
        <position position="153"/>
    </location>
    <ligand>
        <name>D-ribose 5-phosphate</name>
        <dbReference type="ChEBI" id="CHEBI:78346"/>
    </ligand>
</feature>
<feature type="binding site" evidence="1">
    <location>
        <position position="165"/>
    </location>
    <ligand>
        <name>D-glyceraldehyde 3-phosphate</name>
        <dbReference type="ChEBI" id="CHEBI:59776"/>
    </ligand>
</feature>
<feature type="binding site" evidence="1">
    <location>
        <position position="219"/>
    </location>
    <ligand>
        <name>D-ribose 5-phosphate</name>
        <dbReference type="ChEBI" id="CHEBI:78346"/>
    </ligand>
</feature>
<feature type="binding site" evidence="1">
    <location>
        <begin position="240"/>
        <end position="241"/>
    </location>
    <ligand>
        <name>D-ribose 5-phosphate</name>
        <dbReference type="ChEBI" id="CHEBI:78346"/>
    </ligand>
</feature>
<keyword id="KW-0456">Lyase</keyword>
<keyword id="KW-0663">Pyridoxal phosphate</keyword>
<keyword id="KW-1185">Reference proteome</keyword>
<keyword id="KW-0704">Schiff base</keyword>
<sequence length="299" mass="32022">MKKLGTDLLKRGFAKMVKHGVVMDVTNVEQALIAEEAGATAVMALERVPADIRVQGGVARMSDPEMILEIKDAVSIPVMAKARIGHYVEAQVLESIGVDMVDESEVLTPADEVNHIDKRAFTAPFVCGARNLGEALRRIDEGAAMIRTKGEAGTGNVVEAVKHMRAVNEGIARVIGYKEMGLEAELIQMARNELKVPMELISEVAELKRLPVVNFAAGGIATPADAALMMQMGCDGVFVGSGIFKSGNPAVRAKAIVEATYNFDKPEVIAEVSKNLGEAMVGINIDEIPEEMLLAKRGI</sequence>